<sequence>MRAKWRKKRMRRLKRKRRKMRQRSK</sequence>
<comment type="function">
    <text evidence="1 4">Component of the small ribosomal subunit (Probable) (Ref.2). The ribosome is a large ribonucleoprotein complex responsible for the synthesis of proteins in the cell.</text>
</comment>
<comment type="subunit">
    <text evidence="4">Component of the small ribosomal subunit (Ref.2).</text>
</comment>
<comment type="subcellular location">
    <subcellularLocation>
        <location evidence="1">Cytoplasm</location>
    </subcellularLocation>
</comment>
<comment type="miscellaneous">
    <text evidence="4">Initially thought to be part of the large ribosomal subunit. Crystal structures show eS32/eL41 to be a small ribosomal subunit forming a bridge at the interface of the 2 subunits.</text>
</comment>
<comment type="similarity">
    <text evidence="3">Belongs to the eukaryotic ribosomal protein eS32 family.</text>
</comment>
<accession>Q71H53</accession>
<proteinExistence type="evidence at protein level"/>
<dbReference type="EMBL" id="AF503957">
    <property type="protein sequence ID" value="AAM27459.1"/>
    <property type="molecule type" value="mRNA"/>
</dbReference>
<dbReference type="SMR" id="Q71H53"/>
<dbReference type="GO" id="GO:0005737">
    <property type="term" value="C:cytoplasm"/>
    <property type="evidence" value="ECO:0007669"/>
    <property type="project" value="UniProtKB-SubCell"/>
</dbReference>
<dbReference type="GO" id="GO:1990904">
    <property type="term" value="C:ribonucleoprotein complex"/>
    <property type="evidence" value="ECO:0007669"/>
    <property type="project" value="UniProtKB-KW"/>
</dbReference>
<dbReference type="GO" id="GO:0005840">
    <property type="term" value="C:ribosome"/>
    <property type="evidence" value="ECO:0007669"/>
    <property type="project" value="UniProtKB-KW"/>
</dbReference>
<dbReference type="GO" id="GO:0003735">
    <property type="term" value="F:structural constituent of ribosome"/>
    <property type="evidence" value="ECO:0007669"/>
    <property type="project" value="InterPro"/>
</dbReference>
<dbReference type="GO" id="GO:0006412">
    <property type="term" value="P:translation"/>
    <property type="evidence" value="ECO:0007669"/>
    <property type="project" value="InterPro"/>
</dbReference>
<dbReference type="InterPro" id="IPR007836">
    <property type="entry name" value="Ribosomal_eS32"/>
</dbReference>
<dbReference type="Pfam" id="PF05162">
    <property type="entry name" value="Ribosomal_L41"/>
    <property type="match status" value="1"/>
</dbReference>
<feature type="chain" id="PRO_0000198059" description="Small ribosomal subunit protein eS32">
    <location>
        <begin position="1"/>
        <end position="25"/>
    </location>
</feature>
<feature type="region of interest" description="Disordered" evidence="2">
    <location>
        <begin position="1"/>
        <end position="25"/>
    </location>
</feature>
<gene>
    <name type="primary">rpl41</name>
</gene>
<keyword id="KW-0963">Cytoplasm</keyword>
<keyword id="KW-0687">Ribonucleoprotein</keyword>
<keyword id="KW-0689">Ribosomal protein</keyword>
<evidence type="ECO:0000250" key="1">
    <source>
        <dbReference type="UniProtKB" id="P62947"/>
    </source>
</evidence>
<evidence type="ECO:0000256" key="2">
    <source>
        <dbReference type="SAM" id="MobiDB-lite"/>
    </source>
</evidence>
<evidence type="ECO:0000305" key="3"/>
<evidence type="ECO:0000305" key="4">
    <source ref="2"/>
</evidence>
<protein>
    <recommendedName>
        <fullName evidence="4">Small ribosomal subunit protein eS32</fullName>
    </recommendedName>
    <alternativeName>
        <fullName>60S ribosomal protein L41</fullName>
    </alternativeName>
    <alternativeName>
        <fullName evidence="3">Large ribosomal subunit protein eL41</fullName>
    </alternativeName>
</protein>
<reference key="1">
    <citation type="submission" date="2002-04" db="EMBL/GenBank/DDBJ databases">
        <title>Screening an Epinephelus coioides ovary cDNA library.</title>
        <authorList>
            <person name="Zhang W."/>
            <person name="Zhang Y."/>
            <person name="Lin H."/>
        </authorList>
    </citation>
    <scope>NUCLEOTIDE SEQUENCE [MRNA]</scope>
    <source>
        <tissue>Ovary</tissue>
    </source>
</reference>
<reference key="2">
    <citation type="unpublished observations" date="2023-10">
        <authorList>
            <person name="Leibundgut M.A."/>
            <person name="Ban N."/>
        </authorList>
    </citation>
    <scope>REVISION OF SUBUNIT</scope>
    <scope>NOMENCLATURE</scope>
</reference>
<organism>
    <name type="scientific">Epinephelus coioides</name>
    <name type="common">Orange-spotted grouper</name>
    <name type="synonym">Epinephelus nebulosus</name>
    <dbReference type="NCBI Taxonomy" id="94232"/>
    <lineage>
        <taxon>Eukaryota</taxon>
        <taxon>Metazoa</taxon>
        <taxon>Chordata</taxon>
        <taxon>Craniata</taxon>
        <taxon>Vertebrata</taxon>
        <taxon>Euteleostomi</taxon>
        <taxon>Actinopterygii</taxon>
        <taxon>Neopterygii</taxon>
        <taxon>Teleostei</taxon>
        <taxon>Neoteleostei</taxon>
        <taxon>Acanthomorphata</taxon>
        <taxon>Eupercaria</taxon>
        <taxon>Perciformes</taxon>
        <taxon>Serranoidei</taxon>
        <taxon>Serranidae</taxon>
        <taxon>Epinephelinae</taxon>
        <taxon>Epinephelini</taxon>
        <taxon>Epinephelus</taxon>
    </lineage>
</organism>
<name>RS32_EPICO</name>